<dbReference type="EMBL" id="AE000520">
    <property type="protein sequence ID" value="AAC65200.1"/>
    <property type="molecule type" value="Genomic_DNA"/>
</dbReference>
<dbReference type="PIR" id="A71352">
    <property type="entry name" value="A71352"/>
</dbReference>
<dbReference type="RefSeq" id="WP_010881659.1">
    <property type="nucleotide sequence ID" value="NC_021490.2"/>
</dbReference>
<dbReference type="SMR" id="O83241"/>
<dbReference type="IntAct" id="O83241">
    <property type="interactions" value="1"/>
</dbReference>
<dbReference type="STRING" id="243276.TP_0211"/>
<dbReference type="EnsemblBacteria" id="AAC65200">
    <property type="protein sequence ID" value="AAC65200"/>
    <property type="gene ID" value="TP_0211"/>
</dbReference>
<dbReference type="GeneID" id="93875999"/>
<dbReference type="KEGG" id="tpa:TP_0211"/>
<dbReference type="KEGG" id="tpw:TPANIC_0211"/>
<dbReference type="eggNOG" id="COG0100">
    <property type="taxonomic scope" value="Bacteria"/>
</dbReference>
<dbReference type="HOGENOM" id="CLU_072439_5_0_12"/>
<dbReference type="OrthoDB" id="9806415at2"/>
<dbReference type="Proteomes" id="UP000000811">
    <property type="component" value="Chromosome"/>
</dbReference>
<dbReference type="GO" id="GO:1990904">
    <property type="term" value="C:ribonucleoprotein complex"/>
    <property type="evidence" value="ECO:0007669"/>
    <property type="project" value="UniProtKB-KW"/>
</dbReference>
<dbReference type="GO" id="GO:0005840">
    <property type="term" value="C:ribosome"/>
    <property type="evidence" value="ECO:0007669"/>
    <property type="project" value="UniProtKB-KW"/>
</dbReference>
<dbReference type="GO" id="GO:0019843">
    <property type="term" value="F:rRNA binding"/>
    <property type="evidence" value="ECO:0007669"/>
    <property type="project" value="UniProtKB-UniRule"/>
</dbReference>
<dbReference type="GO" id="GO:0003735">
    <property type="term" value="F:structural constituent of ribosome"/>
    <property type="evidence" value="ECO:0007669"/>
    <property type="project" value="InterPro"/>
</dbReference>
<dbReference type="GO" id="GO:0006412">
    <property type="term" value="P:translation"/>
    <property type="evidence" value="ECO:0007669"/>
    <property type="project" value="UniProtKB-UniRule"/>
</dbReference>
<dbReference type="FunFam" id="3.30.420.80:FF:000001">
    <property type="entry name" value="30S ribosomal protein S11"/>
    <property type="match status" value="1"/>
</dbReference>
<dbReference type="Gene3D" id="3.30.420.80">
    <property type="entry name" value="Ribosomal protein S11"/>
    <property type="match status" value="1"/>
</dbReference>
<dbReference type="HAMAP" id="MF_01310">
    <property type="entry name" value="Ribosomal_uS11"/>
    <property type="match status" value="1"/>
</dbReference>
<dbReference type="InterPro" id="IPR001971">
    <property type="entry name" value="Ribosomal_uS11"/>
</dbReference>
<dbReference type="InterPro" id="IPR019981">
    <property type="entry name" value="Ribosomal_uS11_bac-type"/>
</dbReference>
<dbReference type="InterPro" id="IPR036967">
    <property type="entry name" value="Ribosomal_uS11_sf"/>
</dbReference>
<dbReference type="NCBIfam" id="NF003698">
    <property type="entry name" value="PRK05309.1"/>
    <property type="match status" value="1"/>
</dbReference>
<dbReference type="NCBIfam" id="TIGR03632">
    <property type="entry name" value="uS11_bact"/>
    <property type="match status" value="1"/>
</dbReference>
<dbReference type="PANTHER" id="PTHR11759">
    <property type="entry name" value="40S RIBOSOMAL PROTEIN S14/30S RIBOSOMAL PROTEIN S11"/>
    <property type="match status" value="1"/>
</dbReference>
<dbReference type="Pfam" id="PF00411">
    <property type="entry name" value="Ribosomal_S11"/>
    <property type="match status" value="1"/>
</dbReference>
<dbReference type="PIRSF" id="PIRSF002131">
    <property type="entry name" value="Ribosomal_S11"/>
    <property type="match status" value="1"/>
</dbReference>
<dbReference type="SUPFAM" id="SSF53137">
    <property type="entry name" value="Translational machinery components"/>
    <property type="match status" value="1"/>
</dbReference>
<organism>
    <name type="scientific">Treponema pallidum (strain Nichols)</name>
    <dbReference type="NCBI Taxonomy" id="243276"/>
    <lineage>
        <taxon>Bacteria</taxon>
        <taxon>Pseudomonadati</taxon>
        <taxon>Spirochaetota</taxon>
        <taxon>Spirochaetia</taxon>
        <taxon>Spirochaetales</taxon>
        <taxon>Treponemataceae</taxon>
        <taxon>Treponema</taxon>
    </lineage>
</organism>
<proteinExistence type="inferred from homology"/>
<keyword id="KW-1185">Reference proteome</keyword>
<keyword id="KW-0687">Ribonucleoprotein</keyword>
<keyword id="KW-0689">Ribosomal protein</keyword>
<keyword id="KW-0694">RNA-binding</keyword>
<keyword id="KW-0699">rRNA-binding</keyword>
<name>RS11_TREPA</name>
<gene>
    <name evidence="1" type="primary">rpsK</name>
    <name type="ordered locus">TP_0211</name>
</gene>
<accession>O83241</accession>
<comment type="function">
    <text evidence="1">Located on the platform of the 30S subunit, it bridges several disparate RNA helices of the 16S rRNA. Forms part of the Shine-Dalgarno cleft in the 70S ribosome.</text>
</comment>
<comment type="subunit">
    <text evidence="1">Part of the 30S ribosomal subunit. Interacts with proteins S7 and S18. Binds to IF-3.</text>
</comment>
<comment type="similarity">
    <text evidence="1">Belongs to the universal ribosomal protein uS11 family.</text>
</comment>
<reference key="1">
    <citation type="journal article" date="1998" name="Science">
        <title>Complete genome sequence of Treponema pallidum, the syphilis spirochete.</title>
        <authorList>
            <person name="Fraser C.M."/>
            <person name="Norris S.J."/>
            <person name="Weinstock G.M."/>
            <person name="White O."/>
            <person name="Sutton G.G."/>
            <person name="Dodson R.J."/>
            <person name="Gwinn M.L."/>
            <person name="Hickey E.K."/>
            <person name="Clayton R.A."/>
            <person name="Ketchum K.A."/>
            <person name="Sodergren E."/>
            <person name="Hardham J.M."/>
            <person name="McLeod M.P."/>
            <person name="Salzberg S.L."/>
            <person name="Peterson J.D."/>
            <person name="Khalak H.G."/>
            <person name="Richardson D.L."/>
            <person name="Howell J.K."/>
            <person name="Chidambaram M."/>
            <person name="Utterback T.R."/>
            <person name="McDonald L.A."/>
            <person name="Artiach P."/>
            <person name="Bowman C."/>
            <person name="Cotton M.D."/>
            <person name="Fujii C."/>
            <person name="Garland S.A."/>
            <person name="Hatch B."/>
            <person name="Horst K."/>
            <person name="Roberts K.M."/>
            <person name="Sandusky M."/>
            <person name="Weidman J.F."/>
            <person name="Smith H.O."/>
            <person name="Venter J.C."/>
        </authorList>
    </citation>
    <scope>NUCLEOTIDE SEQUENCE [LARGE SCALE GENOMIC DNA]</scope>
    <source>
        <strain>Nichols</strain>
    </source>
</reference>
<protein>
    <recommendedName>
        <fullName evidence="1">Small ribosomal subunit protein uS11</fullName>
    </recommendedName>
    <alternativeName>
        <fullName evidence="2">30S ribosomal protein S11</fullName>
    </alternativeName>
</protein>
<evidence type="ECO:0000255" key="1">
    <source>
        <dbReference type="HAMAP-Rule" id="MF_01310"/>
    </source>
</evidence>
<evidence type="ECO:0000305" key="2"/>
<feature type="chain" id="PRO_0000123249" description="Small ribosomal subunit protein uS11">
    <location>
        <begin position="1"/>
        <end position="126"/>
    </location>
</feature>
<sequence length="126" mass="13739">MAVTKKRKEKKNVYEGNVYIQATFNNTIITVTDLQGNALSWASSGGLGFNGAKKSTPFAAQTVAEAAVQKAQQCGLREVHVFVKGPGIGRESAIRMLGTMGLRVRSIRDITPIPHNGCRPRKTRRI</sequence>